<evidence type="ECO:0000255" key="1">
    <source>
        <dbReference type="HAMAP-Rule" id="MF_01559"/>
    </source>
</evidence>
<gene>
    <name evidence="1" type="primary">lldD</name>
    <name type="ordered locus">Ent638_0130</name>
</gene>
<feature type="chain" id="PRO_1000068984" description="L-lactate dehydrogenase">
    <location>
        <begin position="1"/>
        <end position="395"/>
    </location>
</feature>
<feature type="domain" description="FMN hydroxy acid dehydrogenase" evidence="1">
    <location>
        <begin position="1"/>
        <end position="380"/>
    </location>
</feature>
<feature type="active site" description="Proton acceptor" evidence="1">
    <location>
        <position position="275"/>
    </location>
</feature>
<feature type="binding site" evidence="1">
    <location>
        <position position="24"/>
    </location>
    <ligand>
        <name>substrate</name>
    </ligand>
</feature>
<feature type="binding site" evidence="1">
    <location>
        <position position="106"/>
    </location>
    <ligand>
        <name>FMN</name>
        <dbReference type="ChEBI" id="CHEBI:58210"/>
    </ligand>
</feature>
<feature type="binding site" evidence="1">
    <location>
        <position position="127"/>
    </location>
    <ligand>
        <name>FMN</name>
        <dbReference type="ChEBI" id="CHEBI:58210"/>
    </ligand>
</feature>
<feature type="binding site" evidence="1">
    <location>
        <position position="129"/>
    </location>
    <ligand>
        <name>substrate</name>
    </ligand>
</feature>
<feature type="binding site" evidence="1">
    <location>
        <position position="155"/>
    </location>
    <ligand>
        <name>FMN</name>
        <dbReference type="ChEBI" id="CHEBI:58210"/>
    </ligand>
</feature>
<feature type="binding site" evidence="1">
    <location>
        <position position="164"/>
    </location>
    <ligand>
        <name>substrate</name>
    </ligand>
</feature>
<feature type="binding site" evidence="1">
    <location>
        <position position="251"/>
    </location>
    <ligand>
        <name>FMN</name>
        <dbReference type="ChEBI" id="CHEBI:58210"/>
    </ligand>
</feature>
<feature type="binding site" evidence="1">
    <location>
        <position position="278"/>
    </location>
    <ligand>
        <name>substrate</name>
    </ligand>
</feature>
<feature type="binding site" evidence="1">
    <location>
        <begin position="306"/>
        <end position="330"/>
    </location>
    <ligand>
        <name>FMN</name>
        <dbReference type="ChEBI" id="CHEBI:58210"/>
    </ligand>
</feature>
<dbReference type="EC" id="1.1.-.-" evidence="1"/>
<dbReference type="EMBL" id="CP000653">
    <property type="protein sequence ID" value="ABP58820.1"/>
    <property type="molecule type" value="Genomic_DNA"/>
</dbReference>
<dbReference type="RefSeq" id="WP_011915396.1">
    <property type="nucleotide sequence ID" value="NC_009436.1"/>
</dbReference>
<dbReference type="SMR" id="A4W540"/>
<dbReference type="STRING" id="399742.Ent638_0130"/>
<dbReference type="KEGG" id="ent:Ent638_0130"/>
<dbReference type="eggNOG" id="COG1304">
    <property type="taxonomic scope" value="Bacteria"/>
</dbReference>
<dbReference type="HOGENOM" id="CLU_020639_0_0_6"/>
<dbReference type="OrthoDB" id="9770452at2"/>
<dbReference type="Proteomes" id="UP000000230">
    <property type="component" value="Chromosome"/>
</dbReference>
<dbReference type="GO" id="GO:0005886">
    <property type="term" value="C:plasma membrane"/>
    <property type="evidence" value="ECO:0007669"/>
    <property type="project" value="UniProtKB-SubCell"/>
</dbReference>
<dbReference type="GO" id="GO:0010181">
    <property type="term" value="F:FMN binding"/>
    <property type="evidence" value="ECO:0007669"/>
    <property type="project" value="InterPro"/>
</dbReference>
<dbReference type="GO" id="GO:0004459">
    <property type="term" value="F:L-lactate dehydrogenase activity"/>
    <property type="evidence" value="ECO:0007669"/>
    <property type="project" value="UniProtKB-UniRule"/>
</dbReference>
<dbReference type="GO" id="GO:0009060">
    <property type="term" value="P:aerobic respiration"/>
    <property type="evidence" value="ECO:0007669"/>
    <property type="project" value="TreeGrafter"/>
</dbReference>
<dbReference type="GO" id="GO:0006089">
    <property type="term" value="P:lactate metabolic process"/>
    <property type="evidence" value="ECO:0007669"/>
    <property type="project" value="UniProtKB-UniRule"/>
</dbReference>
<dbReference type="CDD" id="cd02809">
    <property type="entry name" value="alpha_hydroxyacid_oxid_FMN"/>
    <property type="match status" value="1"/>
</dbReference>
<dbReference type="FunFam" id="3.20.20.70:FF:000029">
    <property type="entry name" value="L-lactate dehydrogenase"/>
    <property type="match status" value="1"/>
</dbReference>
<dbReference type="Gene3D" id="3.20.20.70">
    <property type="entry name" value="Aldolase class I"/>
    <property type="match status" value="1"/>
</dbReference>
<dbReference type="HAMAP" id="MF_01559">
    <property type="entry name" value="L_lact_dehydr"/>
    <property type="match status" value="1"/>
</dbReference>
<dbReference type="InterPro" id="IPR013785">
    <property type="entry name" value="Aldolase_TIM"/>
</dbReference>
<dbReference type="InterPro" id="IPR012133">
    <property type="entry name" value="Alpha-hydoxy_acid_DH_FMN"/>
</dbReference>
<dbReference type="InterPro" id="IPR000262">
    <property type="entry name" value="FMN-dep_DH"/>
</dbReference>
<dbReference type="InterPro" id="IPR037396">
    <property type="entry name" value="FMN_HAD"/>
</dbReference>
<dbReference type="InterPro" id="IPR008259">
    <property type="entry name" value="FMN_hydac_DH_AS"/>
</dbReference>
<dbReference type="InterPro" id="IPR020920">
    <property type="entry name" value="LldD"/>
</dbReference>
<dbReference type="NCBIfam" id="NF033901">
    <property type="entry name" value="L_lactate_LldD"/>
    <property type="match status" value="1"/>
</dbReference>
<dbReference type="NCBIfam" id="NF008398">
    <property type="entry name" value="PRK11197.1"/>
    <property type="match status" value="1"/>
</dbReference>
<dbReference type="PANTHER" id="PTHR10578:SF85">
    <property type="entry name" value="L-LACTATE DEHYDROGENASE"/>
    <property type="match status" value="1"/>
</dbReference>
<dbReference type="PANTHER" id="PTHR10578">
    <property type="entry name" value="S -2-HYDROXY-ACID OXIDASE-RELATED"/>
    <property type="match status" value="1"/>
</dbReference>
<dbReference type="Pfam" id="PF01070">
    <property type="entry name" value="FMN_dh"/>
    <property type="match status" value="1"/>
</dbReference>
<dbReference type="PIRSF" id="PIRSF000138">
    <property type="entry name" value="Al-hdrx_acd_dh"/>
    <property type="match status" value="1"/>
</dbReference>
<dbReference type="SUPFAM" id="SSF51395">
    <property type="entry name" value="FMN-linked oxidoreductases"/>
    <property type="match status" value="1"/>
</dbReference>
<dbReference type="PROSITE" id="PS00557">
    <property type="entry name" value="FMN_HYDROXY_ACID_DH_1"/>
    <property type="match status" value="1"/>
</dbReference>
<dbReference type="PROSITE" id="PS51349">
    <property type="entry name" value="FMN_HYDROXY_ACID_DH_2"/>
    <property type="match status" value="1"/>
</dbReference>
<keyword id="KW-0997">Cell inner membrane</keyword>
<keyword id="KW-1003">Cell membrane</keyword>
<keyword id="KW-0285">Flavoprotein</keyword>
<keyword id="KW-0288">FMN</keyword>
<keyword id="KW-0472">Membrane</keyword>
<keyword id="KW-0560">Oxidoreductase</keyword>
<reference key="1">
    <citation type="journal article" date="2010" name="PLoS Genet.">
        <title>Genome sequence of the plant growth promoting endophytic bacterium Enterobacter sp. 638.</title>
        <authorList>
            <person name="Taghavi S."/>
            <person name="van der Lelie D."/>
            <person name="Hoffman A."/>
            <person name="Zhang Y.B."/>
            <person name="Walla M.D."/>
            <person name="Vangronsveld J."/>
            <person name="Newman L."/>
            <person name="Monchy S."/>
        </authorList>
    </citation>
    <scope>NUCLEOTIDE SEQUENCE [LARGE SCALE GENOMIC DNA]</scope>
    <source>
        <strain>638</strain>
    </source>
</reference>
<sequence>MIISAASDYRAAAQRILPPFLFHYIDGGAYSEHTLRRNVEDLSEVALRQRVLKNMSDLSLETKLFNETLSMPVALAPVGLCGMYARRGEVQAAAAADARGIPFTLSTVSVCPIEEVAPTIKRPMWFQLYVLRDRGFMRNALERAKAAGCSTLVFTVDMPTPGARYRDAHSGMSGANAAMRRYWQAVTHPQWAWDVGVNGRPHDLGNISAYLGKPTGLEDYIGWLANNFDPSISWKDLEWIREFWDGPMVIKGILDPEDARDAVRFGADGIVVSNHGGRQLDGVLSSARALPAIADAVKGDIAILADSGIRNGLDVVRMIALGADSVLLGRAYLYALATHGQAGVANLLNLIEKEMKVAMTLTGAKTISEISKDSLVQELSRIPSGLAPLAQGTAA</sequence>
<comment type="function">
    <text evidence="1">Catalyzes the conversion of L-lactate to pyruvate. Is coupled to the respiratory chain.</text>
</comment>
<comment type="catalytic activity">
    <reaction evidence="1">
        <text>(S)-lactate + A = pyruvate + AH2</text>
        <dbReference type="Rhea" id="RHEA:45816"/>
        <dbReference type="ChEBI" id="CHEBI:13193"/>
        <dbReference type="ChEBI" id="CHEBI:15361"/>
        <dbReference type="ChEBI" id="CHEBI:16651"/>
        <dbReference type="ChEBI" id="CHEBI:17499"/>
    </reaction>
</comment>
<comment type="cofactor">
    <cofactor evidence="1">
        <name>FMN</name>
        <dbReference type="ChEBI" id="CHEBI:58210"/>
    </cofactor>
</comment>
<comment type="subcellular location">
    <subcellularLocation>
        <location evidence="1">Cell inner membrane</location>
        <topology evidence="1">Peripheral membrane protein</topology>
    </subcellularLocation>
</comment>
<comment type="similarity">
    <text evidence="1">Belongs to the FMN-dependent alpha-hydroxy acid dehydrogenase family.</text>
</comment>
<protein>
    <recommendedName>
        <fullName evidence="1">L-lactate dehydrogenase</fullName>
        <ecNumber evidence="1">1.1.-.-</ecNumber>
    </recommendedName>
</protein>
<name>LLDD_ENT38</name>
<accession>A4W540</accession>
<proteinExistence type="inferred from homology"/>
<organism>
    <name type="scientific">Enterobacter sp. (strain 638)</name>
    <dbReference type="NCBI Taxonomy" id="399742"/>
    <lineage>
        <taxon>Bacteria</taxon>
        <taxon>Pseudomonadati</taxon>
        <taxon>Pseudomonadota</taxon>
        <taxon>Gammaproteobacteria</taxon>
        <taxon>Enterobacterales</taxon>
        <taxon>Enterobacteriaceae</taxon>
        <taxon>Enterobacter</taxon>
    </lineage>
</organism>